<protein>
    <recommendedName>
        <fullName evidence="1">Protein translocase subunit SecE</fullName>
    </recommendedName>
</protein>
<evidence type="ECO:0000255" key="1">
    <source>
        <dbReference type="HAMAP-Rule" id="MF_00422"/>
    </source>
</evidence>
<gene>
    <name evidence="1" type="primary">secE</name>
    <name type="ordered locus">bbp_041</name>
</gene>
<organism>
    <name type="scientific">Buchnera aphidicola subsp. Baizongia pistaciae (strain Bp)</name>
    <dbReference type="NCBI Taxonomy" id="224915"/>
    <lineage>
        <taxon>Bacteria</taxon>
        <taxon>Pseudomonadati</taxon>
        <taxon>Pseudomonadota</taxon>
        <taxon>Gammaproteobacteria</taxon>
        <taxon>Enterobacterales</taxon>
        <taxon>Erwiniaceae</taxon>
        <taxon>Buchnera</taxon>
    </lineage>
</organism>
<comment type="function">
    <text evidence="1">Essential subunit of the Sec protein translocation channel SecYEG. Clamps together the 2 halves of SecY. May contact the channel plug during translocation.</text>
</comment>
<comment type="subunit">
    <text evidence="1">Component of the Sec protein translocase complex. Heterotrimer consisting of SecY, SecE and SecG subunits. The heterotrimers can form oligomers, although 1 heterotrimer is thought to be able to translocate proteins. Interacts with the ribosome. Interacts with SecDF, and other proteins may be involved. Interacts with SecA.</text>
</comment>
<comment type="subcellular location">
    <subcellularLocation>
        <location evidence="1">Cell membrane</location>
        <topology evidence="1">Multi-pass membrane protein</topology>
    </subcellularLocation>
</comment>
<comment type="similarity">
    <text evidence="1">Belongs to the SecE/SEC61-gamma family.</text>
</comment>
<proteinExistence type="inferred from homology"/>
<reference key="1">
    <citation type="journal article" date="2003" name="Proc. Natl. Acad. Sci. U.S.A.">
        <title>Reductive genome evolution in Buchnera aphidicola.</title>
        <authorList>
            <person name="van Ham R.C.H.J."/>
            <person name="Kamerbeek J."/>
            <person name="Palacios C."/>
            <person name="Rausell C."/>
            <person name="Abascal F."/>
            <person name="Bastolla U."/>
            <person name="Fernandez J.M."/>
            <person name="Jimenez L."/>
            <person name="Postigo M."/>
            <person name="Silva F.J."/>
            <person name="Tamames J."/>
            <person name="Viguera E."/>
            <person name="Latorre A."/>
            <person name="Valencia A."/>
            <person name="Moran F."/>
            <person name="Moya A."/>
        </authorList>
    </citation>
    <scope>NUCLEOTIDE SEQUENCE [LARGE SCALE GENOMIC DNA]</scope>
    <source>
        <strain>Bp</strain>
    </source>
</reference>
<sequence length="127" mass="14719">MIKATKLKKKYDKLKIAKWSFLGILIILFILSNHYYIKHSNIFQNILLTSLTILSTGLIFLTKSGKKFLIFTKSAIHETKLITWPNFKDTLHVTFTVIIVTILLALILWGLDNILIWFISLITSLRL</sequence>
<feature type="chain" id="PRO_0000104162" description="Protein translocase subunit SecE">
    <location>
        <begin position="1"/>
        <end position="127"/>
    </location>
</feature>
<feature type="transmembrane region" description="Helical" evidence="1">
    <location>
        <begin position="16"/>
        <end position="36"/>
    </location>
</feature>
<feature type="transmembrane region" description="Helical" evidence="1">
    <location>
        <begin position="42"/>
        <end position="62"/>
    </location>
</feature>
<feature type="transmembrane region" description="Helical" evidence="1">
    <location>
        <begin position="98"/>
        <end position="118"/>
    </location>
</feature>
<dbReference type="EMBL" id="AE016826">
    <property type="protein sequence ID" value="AAO26784.1"/>
    <property type="molecule type" value="Genomic_DNA"/>
</dbReference>
<dbReference type="STRING" id="224915.bbp_041"/>
<dbReference type="KEGG" id="bab:bbp_041"/>
<dbReference type="eggNOG" id="COG0690">
    <property type="taxonomic scope" value="Bacteria"/>
</dbReference>
<dbReference type="HOGENOM" id="CLU_113663_0_1_6"/>
<dbReference type="Proteomes" id="UP000000601">
    <property type="component" value="Chromosome"/>
</dbReference>
<dbReference type="GO" id="GO:0005886">
    <property type="term" value="C:plasma membrane"/>
    <property type="evidence" value="ECO:0007669"/>
    <property type="project" value="UniProtKB-SubCell"/>
</dbReference>
<dbReference type="GO" id="GO:0008320">
    <property type="term" value="F:protein transmembrane transporter activity"/>
    <property type="evidence" value="ECO:0007669"/>
    <property type="project" value="UniProtKB-UniRule"/>
</dbReference>
<dbReference type="GO" id="GO:0065002">
    <property type="term" value="P:intracellular protein transmembrane transport"/>
    <property type="evidence" value="ECO:0007669"/>
    <property type="project" value="UniProtKB-UniRule"/>
</dbReference>
<dbReference type="GO" id="GO:0009306">
    <property type="term" value="P:protein secretion"/>
    <property type="evidence" value="ECO:0007669"/>
    <property type="project" value="UniProtKB-UniRule"/>
</dbReference>
<dbReference type="GO" id="GO:0006605">
    <property type="term" value="P:protein targeting"/>
    <property type="evidence" value="ECO:0007669"/>
    <property type="project" value="UniProtKB-UniRule"/>
</dbReference>
<dbReference type="GO" id="GO:0043952">
    <property type="term" value="P:protein transport by the Sec complex"/>
    <property type="evidence" value="ECO:0007669"/>
    <property type="project" value="UniProtKB-UniRule"/>
</dbReference>
<dbReference type="Gene3D" id="1.20.5.1030">
    <property type="entry name" value="Preprotein translocase secy subunit"/>
    <property type="match status" value="1"/>
</dbReference>
<dbReference type="HAMAP" id="MF_00422">
    <property type="entry name" value="SecE"/>
    <property type="match status" value="1"/>
</dbReference>
<dbReference type="InterPro" id="IPR005807">
    <property type="entry name" value="SecE_bac"/>
</dbReference>
<dbReference type="InterPro" id="IPR038379">
    <property type="entry name" value="SecE_sf"/>
</dbReference>
<dbReference type="InterPro" id="IPR001901">
    <property type="entry name" value="Translocase_SecE/Sec61-g"/>
</dbReference>
<dbReference type="NCBIfam" id="TIGR00964">
    <property type="entry name" value="secE_bact"/>
    <property type="match status" value="1"/>
</dbReference>
<dbReference type="PANTHER" id="PTHR33910">
    <property type="entry name" value="PROTEIN TRANSLOCASE SUBUNIT SECE"/>
    <property type="match status" value="1"/>
</dbReference>
<dbReference type="PANTHER" id="PTHR33910:SF1">
    <property type="entry name" value="PROTEIN TRANSLOCASE SUBUNIT SECE"/>
    <property type="match status" value="1"/>
</dbReference>
<dbReference type="Pfam" id="PF00584">
    <property type="entry name" value="SecE"/>
    <property type="match status" value="1"/>
</dbReference>
<dbReference type="PRINTS" id="PR01650">
    <property type="entry name" value="SECETRNLCASE"/>
</dbReference>
<keyword id="KW-1003">Cell membrane</keyword>
<keyword id="KW-0472">Membrane</keyword>
<keyword id="KW-0653">Protein transport</keyword>
<keyword id="KW-1185">Reference proteome</keyword>
<keyword id="KW-0811">Translocation</keyword>
<keyword id="KW-0812">Transmembrane</keyword>
<keyword id="KW-1133">Transmembrane helix</keyword>
<keyword id="KW-0813">Transport</keyword>
<name>SECE_BUCBP</name>
<accession>Q89B14</accession>